<accession>Q9T0D3</accession>
<accession>Q9SCW3</accession>
<name>HFB2B_ARATH</name>
<proteinExistence type="evidence at transcript level"/>
<keyword id="KW-0238">DNA-binding</keyword>
<keyword id="KW-0539">Nucleus</keyword>
<keyword id="KW-0597">Phosphoprotein</keyword>
<keyword id="KW-1185">Reference proteome</keyword>
<keyword id="KW-0346">Stress response</keyword>
<keyword id="KW-0804">Transcription</keyword>
<keyword id="KW-0805">Transcription regulation</keyword>
<organism>
    <name type="scientific">Arabidopsis thaliana</name>
    <name type="common">Mouse-ear cress</name>
    <dbReference type="NCBI Taxonomy" id="3702"/>
    <lineage>
        <taxon>Eukaryota</taxon>
        <taxon>Viridiplantae</taxon>
        <taxon>Streptophyta</taxon>
        <taxon>Embryophyta</taxon>
        <taxon>Tracheophyta</taxon>
        <taxon>Spermatophyta</taxon>
        <taxon>Magnoliopsida</taxon>
        <taxon>eudicotyledons</taxon>
        <taxon>Gunneridae</taxon>
        <taxon>Pentapetalae</taxon>
        <taxon>rosids</taxon>
        <taxon>malvids</taxon>
        <taxon>Brassicales</taxon>
        <taxon>Brassicaceae</taxon>
        <taxon>Camelineae</taxon>
        <taxon>Arabidopsis</taxon>
    </lineage>
</organism>
<gene>
    <name type="primary">HSFB2B</name>
    <name type="synonym">HSF11</name>
    <name type="synonym">HSF7</name>
    <name type="ordered locus">At4g11660</name>
    <name type="ORF">T5C23.90</name>
</gene>
<sequence>MPGEQTGETPTVAGVGGGGAGCSAGNSGGSSGCGAGGGGGGSGGGGGGGGDSQRSIPTPFLTKTYQLVEDPVYDELISWNEDGTTFIVWRPAEFARDLLPKYFKHNNFSSFVRQLNTYGFRKVVPDRWEFSNDCFKRGEKILLRDIQRRKISQPAMAAAAAAAAAAVAASAVTVAAVPVVAHIVSPSNSGEEQVISSNSSPAAAAAAIGGVVGGGSLQRTTSCTTAPELVEENERLRKDNERLRKEMTKLKGLYANIYTLMANFTPGQEDCAHLLPEGKPLDLLPERQEMSEAIMASEIETGIGLKLGEDLTPRLFGVSIGVKRARREEELGAAEEEDDDRREAAAQEGEQSSDVKAEPMEENNSGNHNGSWLELGK</sequence>
<dbReference type="EMBL" id="AL049500">
    <property type="protein sequence ID" value="CAB39937.1"/>
    <property type="molecule type" value="Genomic_DNA"/>
</dbReference>
<dbReference type="EMBL" id="AL161532">
    <property type="protein sequence ID" value="CAB78209.1"/>
    <property type="molecule type" value="Genomic_DNA"/>
</dbReference>
<dbReference type="EMBL" id="CP002687">
    <property type="protein sequence ID" value="AEE83036.1"/>
    <property type="molecule type" value="Genomic_DNA"/>
</dbReference>
<dbReference type="EMBL" id="AY093206">
    <property type="protein sequence ID" value="AAM13205.1"/>
    <property type="molecule type" value="mRNA"/>
</dbReference>
<dbReference type="EMBL" id="BT008471">
    <property type="protein sequence ID" value="AAP37830.1"/>
    <property type="molecule type" value="mRNA"/>
</dbReference>
<dbReference type="EMBL" id="AJ251868">
    <property type="protein sequence ID" value="CAB63803.1"/>
    <property type="molecule type" value="mRNA"/>
</dbReference>
<dbReference type="PIR" id="T04213">
    <property type="entry name" value="T04213"/>
</dbReference>
<dbReference type="SMR" id="Q9T0D3"/>
<dbReference type="BioGRID" id="12069">
    <property type="interactions" value="10"/>
</dbReference>
<dbReference type="FunCoup" id="Q9T0D3">
    <property type="interactions" value="236"/>
</dbReference>
<dbReference type="IntAct" id="Q9T0D3">
    <property type="interactions" value="1"/>
</dbReference>
<dbReference type="STRING" id="3702.Q9T0D3"/>
<dbReference type="GlyGen" id="Q9T0D3">
    <property type="glycosylation" value="2 sites"/>
</dbReference>
<dbReference type="iPTMnet" id="Q9T0D3"/>
<dbReference type="PaxDb" id="3702-AT4G11660.1"/>
<dbReference type="ProteomicsDB" id="228799"/>
<dbReference type="EnsemblPlants" id="AT4G11660.1">
    <property type="protein sequence ID" value="AT4G11660.1"/>
    <property type="gene ID" value="AT4G11660"/>
</dbReference>
<dbReference type="GeneID" id="826771"/>
<dbReference type="Gramene" id="AT4G11660.1">
    <property type="protein sequence ID" value="AT4G11660.1"/>
    <property type="gene ID" value="AT4G11660"/>
</dbReference>
<dbReference type="KEGG" id="ath:AT4G11660"/>
<dbReference type="Araport" id="AT4G11660"/>
<dbReference type="TAIR" id="AT4G11660">
    <property type="gene designation" value="AT-HSFB2B"/>
</dbReference>
<dbReference type="eggNOG" id="KOG0627">
    <property type="taxonomic scope" value="Eukaryota"/>
</dbReference>
<dbReference type="HOGENOM" id="CLU_030308_3_2_1"/>
<dbReference type="InParanoid" id="Q9T0D3"/>
<dbReference type="OMA" id="MSEAIMA"/>
<dbReference type="PhylomeDB" id="Q9T0D3"/>
<dbReference type="PRO" id="PR:Q9T0D3"/>
<dbReference type="Proteomes" id="UP000006548">
    <property type="component" value="Chromosome 4"/>
</dbReference>
<dbReference type="ExpressionAtlas" id="Q9T0D3">
    <property type="expression patterns" value="baseline and differential"/>
</dbReference>
<dbReference type="GO" id="GO:0005634">
    <property type="term" value="C:nucleus"/>
    <property type="evidence" value="ECO:0007669"/>
    <property type="project" value="UniProtKB-SubCell"/>
</dbReference>
<dbReference type="GO" id="GO:0003700">
    <property type="term" value="F:DNA-binding transcription factor activity"/>
    <property type="evidence" value="ECO:0000250"/>
    <property type="project" value="TAIR"/>
</dbReference>
<dbReference type="GO" id="GO:0043565">
    <property type="term" value="F:sequence-specific DNA binding"/>
    <property type="evidence" value="ECO:0007669"/>
    <property type="project" value="InterPro"/>
</dbReference>
<dbReference type="GO" id="GO:0071456">
    <property type="term" value="P:cellular response to hypoxia"/>
    <property type="evidence" value="ECO:0007007"/>
    <property type="project" value="TAIR"/>
</dbReference>
<dbReference type="GO" id="GO:0045892">
    <property type="term" value="P:negative regulation of DNA-templated transcription"/>
    <property type="evidence" value="ECO:0000314"/>
    <property type="project" value="TAIR"/>
</dbReference>
<dbReference type="FunFam" id="1.10.10.10:FF:000037">
    <property type="entry name" value="Heat stress transcription factor B-4"/>
    <property type="match status" value="1"/>
</dbReference>
<dbReference type="Gene3D" id="1.10.10.10">
    <property type="entry name" value="Winged helix-like DNA-binding domain superfamily/Winged helix DNA-binding domain"/>
    <property type="match status" value="1"/>
</dbReference>
<dbReference type="InterPro" id="IPR000232">
    <property type="entry name" value="HSF_DNA-bd"/>
</dbReference>
<dbReference type="InterPro" id="IPR036388">
    <property type="entry name" value="WH-like_DNA-bd_sf"/>
</dbReference>
<dbReference type="InterPro" id="IPR036390">
    <property type="entry name" value="WH_DNA-bd_sf"/>
</dbReference>
<dbReference type="PANTHER" id="PTHR10015">
    <property type="entry name" value="HEAT SHOCK TRANSCRIPTION FACTOR"/>
    <property type="match status" value="1"/>
</dbReference>
<dbReference type="PANTHER" id="PTHR10015:SF169">
    <property type="entry name" value="HEAT STRESS TRANSCRIPTION FACTOR B-2B"/>
    <property type="match status" value="1"/>
</dbReference>
<dbReference type="Pfam" id="PF00447">
    <property type="entry name" value="HSF_DNA-bind"/>
    <property type="match status" value="1"/>
</dbReference>
<dbReference type="PRINTS" id="PR00056">
    <property type="entry name" value="HSFDOMAIN"/>
</dbReference>
<dbReference type="SMART" id="SM00415">
    <property type="entry name" value="HSF"/>
    <property type="match status" value="1"/>
</dbReference>
<dbReference type="SUPFAM" id="SSF46785">
    <property type="entry name" value="Winged helix' DNA-binding domain"/>
    <property type="match status" value="1"/>
</dbReference>
<dbReference type="PROSITE" id="PS00434">
    <property type="entry name" value="HSF_DOMAIN"/>
    <property type="match status" value="1"/>
</dbReference>
<evidence type="ECO:0000250" key="1"/>
<evidence type="ECO:0000255" key="2"/>
<evidence type="ECO:0000256" key="3">
    <source>
        <dbReference type="SAM" id="MobiDB-lite"/>
    </source>
</evidence>
<evidence type="ECO:0000305" key="4"/>
<reference key="1">
    <citation type="journal article" date="1999" name="Nature">
        <title>Sequence and analysis of chromosome 4 of the plant Arabidopsis thaliana.</title>
        <authorList>
            <person name="Mayer K.F.X."/>
            <person name="Schueller C."/>
            <person name="Wambutt R."/>
            <person name="Murphy G."/>
            <person name="Volckaert G."/>
            <person name="Pohl T."/>
            <person name="Duesterhoeft A."/>
            <person name="Stiekema W."/>
            <person name="Entian K.-D."/>
            <person name="Terryn N."/>
            <person name="Harris B."/>
            <person name="Ansorge W."/>
            <person name="Brandt P."/>
            <person name="Grivell L.A."/>
            <person name="Rieger M."/>
            <person name="Weichselgartner M."/>
            <person name="de Simone V."/>
            <person name="Obermaier B."/>
            <person name="Mache R."/>
            <person name="Mueller M."/>
            <person name="Kreis M."/>
            <person name="Delseny M."/>
            <person name="Puigdomenech P."/>
            <person name="Watson M."/>
            <person name="Schmidtheini T."/>
            <person name="Reichert B."/>
            <person name="Portetelle D."/>
            <person name="Perez-Alonso M."/>
            <person name="Boutry M."/>
            <person name="Bancroft I."/>
            <person name="Vos P."/>
            <person name="Hoheisel J."/>
            <person name="Zimmermann W."/>
            <person name="Wedler H."/>
            <person name="Ridley P."/>
            <person name="Langham S.-A."/>
            <person name="McCullagh B."/>
            <person name="Bilham L."/>
            <person name="Robben J."/>
            <person name="van der Schueren J."/>
            <person name="Grymonprez B."/>
            <person name="Chuang Y.-J."/>
            <person name="Vandenbussche F."/>
            <person name="Braeken M."/>
            <person name="Weltjens I."/>
            <person name="Voet M."/>
            <person name="Bastiaens I."/>
            <person name="Aert R."/>
            <person name="Defoor E."/>
            <person name="Weitzenegger T."/>
            <person name="Bothe G."/>
            <person name="Ramsperger U."/>
            <person name="Hilbert H."/>
            <person name="Braun M."/>
            <person name="Holzer E."/>
            <person name="Brandt A."/>
            <person name="Peters S."/>
            <person name="van Staveren M."/>
            <person name="Dirkse W."/>
            <person name="Mooijman P."/>
            <person name="Klein Lankhorst R."/>
            <person name="Rose M."/>
            <person name="Hauf J."/>
            <person name="Koetter P."/>
            <person name="Berneiser S."/>
            <person name="Hempel S."/>
            <person name="Feldpausch M."/>
            <person name="Lamberth S."/>
            <person name="Van den Daele H."/>
            <person name="De Keyser A."/>
            <person name="Buysshaert C."/>
            <person name="Gielen J."/>
            <person name="Villarroel R."/>
            <person name="De Clercq R."/>
            <person name="van Montagu M."/>
            <person name="Rogers J."/>
            <person name="Cronin A."/>
            <person name="Quail M.A."/>
            <person name="Bray-Allen S."/>
            <person name="Clark L."/>
            <person name="Doggett J."/>
            <person name="Hall S."/>
            <person name="Kay M."/>
            <person name="Lennard N."/>
            <person name="McLay K."/>
            <person name="Mayes R."/>
            <person name="Pettett A."/>
            <person name="Rajandream M.A."/>
            <person name="Lyne M."/>
            <person name="Benes V."/>
            <person name="Rechmann S."/>
            <person name="Borkova D."/>
            <person name="Bloecker H."/>
            <person name="Scharfe M."/>
            <person name="Grimm M."/>
            <person name="Loehnert T.-H."/>
            <person name="Dose S."/>
            <person name="de Haan M."/>
            <person name="Maarse A.C."/>
            <person name="Schaefer M."/>
            <person name="Mueller-Auer S."/>
            <person name="Gabel C."/>
            <person name="Fuchs M."/>
            <person name="Fartmann B."/>
            <person name="Granderath K."/>
            <person name="Dauner D."/>
            <person name="Herzl A."/>
            <person name="Neumann S."/>
            <person name="Argiriou A."/>
            <person name="Vitale D."/>
            <person name="Liguori R."/>
            <person name="Piravandi E."/>
            <person name="Massenet O."/>
            <person name="Quigley F."/>
            <person name="Clabauld G."/>
            <person name="Muendlein A."/>
            <person name="Felber R."/>
            <person name="Schnabl S."/>
            <person name="Hiller R."/>
            <person name="Schmidt W."/>
            <person name="Lecharny A."/>
            <person name="Aubourg S."/>
            <person name="Chefdor F."/>
            <person name="Cooke R."/>
            <person name="Berger C."/>
            <person name="Monfort A."/>
            <person name="Casacuberta E."/>
            <person name="Gibbons T."/>
            <person name="Weber N."/>
            <person name="Vandenbol M."/>
            <person name="Bargues M."/>
            <person name="Terol J."/>
            <person name="Torres A."/>
            <person name="Perez-Perez A."/>
            <person name="Purnelle B."/>
            <person name="Bent E."/>
            <person name="Johnson S."/>
            <person name="Tacon D."/>
            <person name="Jesse T."/>
            <person name="Heijnen L."/>
            <person name="Schwarz S."/>
            <person name="Scholler P."/>
            <person name="Heber S."/>
            <person name="Francs P."/>
            <person name="Bielke C."/>
            <person name="Frishman D."/>
            <person name="Haase D."/>
            <person name="Lemcke K."/>
            <person name="Mewes H.-W."/>
            <person name="Stocker S."/>
            <person name="Zaccaria P."/>
            <person name="Bevan M."/>
            <person name="Wilson R.K."/>
            <person name="de la Bastide M."/>
            <person name="Habermann K."/>
            <person name="Parnell L."/>
            <person name="Dedhia N."/>
            <person name="Gnoj L."/>
            <person name="Schutz K."/>
            <person name="Huang E."/>
            <person name="Spiegel L."/>
            <person name="Sekhon M."/>
            <person name="Murray J."/>
            <person name="Sheet P."/>
            <person name="Cordes M."/>
            <person name="Abu-Threideh J."/>
            <person name="Stoneking T."/>
            <person name="Kalicki J."/>
            <person name="Graves T."/>
            <person name="Harmon G."/>
            <person name="Edwards J."/>
            <person name="Latreille P."/>
            <person name="Courtney L."/>
            <person name="Cloud J."/>
            <person name="Abbott A."/>
            <person name="Scott K."/>
            <person name="Johnson D."/>
            <person name="Minx P."/>
            <person name="Bentley D."/>
            <person name="Fulton B."/>
            <person name="Miller N."/>
            <person name="Greco T."/>
            <person name="Kemp K."/>
            <person name="Kramer J."/>
            <person name="Fulton L."/>
            <person name="Mardis E."/>
            <person name="Dante M."/>
            <person name="Pepin K."/>
            <person name="Hillier L.W."/>
            <person name="Nelson J."/>
            <person name="Spieth J."/>
            <person name="Ryan E."/>
            <person name="Andrews S."/>
            <person name="Geisel C."/>
            <person name="Layman D."/>
            <person name="Du H."/>
            <person name="Ali J."/>
            <person name="Berghoff A."/>
            <person name="Jones K."/>
            <person name="Drone K."/>
            <person name="Cotton M."/>
            <person name="Joshu C."/>
            <person name="Antonoiu B."/>
            <person name="Zidanic M."/>
            <person name="Strong C."/>
            <person name="Sun H."/>
            <person name="Lamar B."/>
            <person name="Yordan C."/>
            <person name="Ma P."/>
            <person name="Zhong J."/>
            <person name="Preston R."/>
            <person name="Vil D."/>
            <person name="Shekher M."/>
            <person name="Matero A."/>
            <person name="Shah R."/>
            <person name="Swaby I.K."/>
            <person name="O'Shaughnessy A."/>
            <person name="Rodriguez M."/>
            <person name="Hoffman J."/>
            <person name="Till S."/>
            <person name="Granat S."/>
            <person name="Shohdy N."/>
            <person name="Hasegawa A."/>
            <person name="Hameed A."/>
            <person name="Lodhi M."/>
            <person name="Johnson A."/>
            <person name="Chen E."/>
            <person name="Marra M.A."/>
            <person name="Martienssen R."/>
            <person name="McCombie W.R."/>
        </authorList>
    </citation>
    <scope>NUCLEOTIDE SEQUENCE [LARGE SCALE GENOMIC DNA]</scope>
    <source>
        <strain>cv. Columbia</strain>
    </source>
</reference>
<reference key="2">
    <citation type="journal article" date="2017" name="Plant J.">
        <title>Araport11: a complete reannotation of the Arabidopsis thaliana reference genome.</title>
        <authorList>
            <person name="Cheng C.Y."/>
            <person name="Krishnakumar V."/>
            <person name="Chan A.P."/>
            <person name="Thibaud-Nissen F."/>
            <person name="Schobel S."/>
            <person name="Town C.D."/>
        </authorList>
    </citation>
    <scope>GENOME REANNOTATION</scope>
    <source>
        <strain>cv. Columbia</strain>
    </source>
</reference>
<reference key="3">
    <citation type="journal article" date="2003" name="Science">
        <title>Empirical analysis of transcriptional activity in the Arabidopsis genome.</title>
        <authorList>
            <person name="Yamada K."/>
            <person name="Lim J."/>
            <person name="Dale J.M."/>
            <person name="Chen H."/>
            <person name="Shinn P."/>
            <person name="Palm C.J."/>
            <person name="Southwick A.M."/>
            <person name="Wu H.C."/>
            <person name="Kim C.J."/>
            <person name="Nguyen M."/>
            <person name="Pham P.K."/>
            <person name="Cheuk R.F."/>
            <person name="Karlin-Newmann G."/>
            <person name="Liu S.X."/>
            <person name="Lam B."/>
            <person name="Sakano H."/>
            <person name="Wu T."/>
            <person name="Yu G."/>
            <person name="Miranda M."/>
            <person name="Quach H.L."/>
            <person name="Tripp M."/>
            <person name="Chang C.H."/>
            <person name="Lee J.M."/>
            <person name="Toriumi M.J."/>
            <person name="Chan M.M."/>
            <person name="Tang C.C."/>
            <person name="Onodera C.S."/>
            <person name="Deng J.M."/>
            <person name="Akiyama K."/>
            <person name="Ansari Y."/>
            <person name="Arakawa T."/>
            <person name="Banh J."/>
            <person name="Banno F."/>
            <person name="Bowser L."/>
            <person name="Brooks S.Y."/>
            <person name="Carninci P."/>
            <person name="Chao Q."/>
            <person name="Choy N."/>
            <person name="Enju A."/>
            <person name="Goldsmith A.D."/>
            <person name="Gurjal M."/>
            <person name="Hansen N.F."/>
            <person name="Hayashizaki Y."/>
            <person name="Johnson-Hopson C."/>
            <person name="Hsuan V.W."/>
            <person name="Iida K."/>
            <person name="Karnes M."/>
            <person name="Khan S."/>
            <person name="Koesema E."/>
            <person name="Ishida J."/>
            <person name="Jiang P.X."/>
            <person name="Jones T."/>
            <person name="Kawai J."/>
            <person name="Kamiya A."/>
            <person name="Meyers C."/>
            <person name="Nakajima M."/>
            <person name="Narusaka M."/>
            <person name="Seki M."/>
            <person name="Sakurai T."/>
            <person name="Satou M."/>
            <person name="Tamse R."/>
            <person name="Vaysberg M."/>
            <person name="Wallender E.K."/>
            <person name="Wong C."/>
            <person name="Yamamura Y."/>
            <person name="Yuan S."/>
            <person name="Shinozaki K."/>
            <person name="Davis R.W."/>
            <person name="Theologis A."/>
            <person name="Ecker J.R."/>
        </authorList>
    </citation>
    <scope>NUCLEOTIDE SEQUENCE [LARGE SCALE MRNA]</scope>
    <source>
        <strain>cv. Columbia</strain>
    </source>
</reference>
<reference key="4">
    <citation type="book" date="1999" name="Plant responses to environmental stress">
        <title>De-repression of heat shock protein synthesis in transgenic plants.</title>
        <editorList>
            <person name="Smallwood M.F."/>
            <person name="Calvert C.M."/>
            <person name="Bowles D.J."/>
        </editorList>
        <authorList>
            <person name="Schoeffl F."/>
            <person name="Praendl R."/>
        </authorList>
    </citation>
    <scope>NUCLEOTIDE SEQUENCE [MRNA] OF 50-377</scope>
    <source>
        <strain>cv. Columbia</strain>
        <tissue>Green siliques</tissue>
    </source>
</reference>
<reference key="5">
    <citation type="journal article" date="2001" name="Cell Stress Chaperones">
        <title>Arabidopsis and the heat stress transcription factor world: how many heat stress transcription factors do we need?</title>
        <authorList>
            <person name="Nover L."/>
            <person name="Bharti K."/>
            <person name="Doering P."/>
            <person name="Mishra S.K."/>
            <person name="Ganguli A."/>
            <person name="Scharf K.-D."/>
        </authorList>
    </citation>
    <scope>GENE FAMILY</scope>
    <scope>NOMENCLATURE</scope>
</reference>
<reference key="6">
    <citation type="journal article" date="2008" name="J. Genet. Genomics">
        <title>Genome-wide analysis of heat shock transcription factor families in rice and Arabidopsis.</title>
        <authorList>
            <person name="Guo J."/>
            <person name="Wu J."/>
            <person name="Ji Q."/>
            <person name="Wang C."/>
            <person name="Luo L."/>
            <person name="Yuan Y."/>
            <person name="Wang Y."/>
            <person name="Wang J."/>
        </authorList>
    </citation>
    <scope>GENE FAMILY</scope>
    <scope>NOMENCLATURE</scope>
</reference>
<protein>
    <recommendedName>
        <fullName>Heat stress transcription factor B-2b</fullName>
        <shortName>AtHsfB2b</shortName>
    </recommendedName>
    <alternativeName>
        <fullName>AtHsf-11</fullName>
    </alternativeName>
    <alternativeName>
        <fullName>Heat shock factor protein 7</fullName>
        <shortName>HSF 7</shortName>
    </alternativeName>
    <alternativeName>
        <fullName>Heat shock transcription factor 7</fullName>
        <shortName>HSTF 7</shortName>
    </alternativeName>
</protein>
<comment type="function">
    <text>Transcriptional regulator that specifically binds DNA sequence 5'-AGAAnnTTCT-3' known as heat shock promoter elements (HSE).</text>
</comment>
<comment type="subunit">
    <text evidence="1">Homotrimer.</text>
</comment>
<comment type="subcellular location">
    <subcellularLocation>
        <location evidence="4">Nucleus</location>
    </subcellularLocation>
</comment>
<comment type="domain">
    <text>The hydrophobic-rich region (HR-A/B) corresponds to the oligomerization domain.</text>
</comment>
<comment type="PTM">
    <text evidence="1">Exhibits temperature-dependent phosphorylation.</text>
</comment>
<comment type="similarity">
    <text evidence="4">Belongs to the HSF family. Class B subfamily.</text>
</comment>
<feature type="chain" id="PRO_0000124588" description="Heat stress transcription factor B-2b">
    <location>
        <begin position="1"/>
        <end position="377"/>
    </location>
</feature>
<feature type="DNA-binding region" evidence="1">
    <location>
        <begin position="57"/>
        <end position="151"/>
    </location>
</feature>
<feature type="region of interest" description="Disordered" evidence="3">
    <location>
        <begin position="1"/>
        <end position="56"/>
    </location>
</feature>
<feature type="region of interest" description="Hydrophobic repeat HR-A/B">
    <location>
        <begin position="220"/>
        <end position="265"/>
    </location>
</feature>
<feature type="region of interest" description="Disordered" evidence="3">
    <location>
        <begin position="326"/>
        <end position="377"/>
    </location>
</feature>
<feature type="short sequence motif" description="Nuclear localization signal" evidence="2">
    <location>
        <begin position="323"/>
        <end position="327"/>
    </location>
</feature>
<feature type="compositionally biased region" description="Gly residues" evidence="3">
    <location>
        <begin position="14"/>
        <end position="51"/>
    </location>
</feature>
<feature type="compositionally biased region" description="Acidic residues" evidence="3">
    <location>
        <begin position="331"/>
        <end position="340"/>
    </location>
</feature>
<feature type="sequence conflict" description="In Ref. 4; CAB63803." evidence="4" ref="4">
    <original>G</original>
    <variation>R</variation>
    <location>
        <position position="50"/>
    </location>
</feature>